<sequence>MKTFVLHIFIFALVAFASASRDSAKKIGSQYDNYETCLTEHGLTDDDIFSIGEVSSGQHKTNHEDTELHKNGCVLQCMLEKDGLMSGADYDEEKMREDYIKETGTEPGDQRIEALNACMQETKDMEDKCDKSLLLVACVLAAEAVLADSNEGA</sequence>
<accession>Q8WRQ4</accession>
<accession>A9LKD6</accession>
<accession>A9LKD7</accession>
<organism>
    <name type="scientific">Solenopsis interrupta</name>
    <name type="common">Fire ant</name>
    <dbReference type="NCBI Taxonomy" id="176594"/>
    <lineage>
        <taxon>Eukaryota</taxon>
        <taxon>Metazoa</taxon>
        <taxon>Ecdysozoa</taxon>
        <taxon>Arthropoda</taxon>
        <taxon>Hexapoda</taxon>
        <taxon>Insecta</taxon>
        <taxon>Pterygota</taxon>
        <taxon>Neoptera</taxon>
        <taxon>Endopterygota</taxon>
        <taxon>Hymenoptera</taxon>
        <taxon>Apocrita</taxon>
        <taxon>Aculeata</taxon>
        <taxon>Formicoidea</taxon>
        <taxon>Formicidae</taxon>
        <taxon>Myrmicinae</taxon>
        <taxon>Solenopsis</taxon>
    </lineage>
</organism>
<keyword id="KW-0085">Behavior</keyword>
<keyword id="KW-1015">Disulfide bond</keyword>
<keyword id="KW-0589">Pheromone response</keyword>
<keyword id="KW-0590">Pheromone-binding</keyword>
<keyword id="KW-0964">Secreted</keyword>
<keyword id="KW-0732">Signal</keyword>
<keyword id="KW-0813">Transport</keyword>
<name>PBGP9_SOLIT</name>
<reference evidence="5" key="1">
    <citation type="journal article" date="2002" name="Science">
        <title>Identification of a major gene regulating complex social behavior.</title>
        <authorList>
            <person name="Krieger M.J.B."/>
            <person name="Ross K.G."/>
        </authorList>
    </citation>
    <scope>NUCLEOTIDE SEQUENCE [GENOMIC DNA]</scope>
</reference>
<reference evidence="8" key="2">
    <citation type="journal article" date="2007" name="PLoS ONE">
        <title>Molecular variation at a candidate gene implicated in the regulation of fire ant social behavior.</title>
        <authorList>
            <person name="Gotzek D."/>
            <person name="Shoemaker D.D."/>
            <person name="Ross K.G."/>
        </authorList>
    </citation>
    <scope>NUCLEOTIDE SEQUENCE [GENOMIC DNA]</scope>
    <source>
        <strain evidence="6">Pu-42/a</strain>
        <strain evidence="7">Pu-42/b</strain>
        <strain evidence="8">Pu-46</strain>
    </source>
</reference>
<proteinExistence type="inferred from homology"/>
<gene>
    <name evidence="5" type="primary">Gp-9</name>
</gene>
<protein>
    <recommendedName>
        <fullName>Pheromone-binding protein Gp-9</fullName>
        <shortName>PBP</shortName>
    </recommendedName>
    <alternativeName>
        <fullName>Putative odorant-binding protein Gp-9</fullName>
    </alternativeName>
</protein>
<feature type="signal peptide" evidence="3">
    <location>
        <begin position="1"/>
        <end position="19"/>
    </location>
</feature>
<feature type="chain" id="PRO_5000061687" description="Pheromone-binding protein Gp-9" evidence="3">
    <location>
        <begin position="20"/>
        <end position="153"/>
    </location>
</feature>
<feature type="disulfide bond" evidence="2">
    <location>
        <begin position="37"/>
        <end position="77"/>
    </location>
</feature>
<feature type="disulfide bond" evidence="2">
    <location>
        <begin position="73"/>
        <end position="129"/>
    </location>
</feature>
<feature type="disulfide bond" evidence="2">
    <location>
        <begin position="118"/>
        <end position="138"/>
    </location>
</feature>
<comment type="function">
    <text evidence="3">Colony queen number, a major feature of social organization, is associated with worker genotype for Gp-9. Colonies are headed by either a single reproductive queen (monogyne form) or multiple queens (polygyne form). Differences in worker Gp-9 genotypes between social forms may cause differences in workers' abilities to recognize queens and regulate their numbers (By similarity).</text>
</comment>
<comment type="subunit">
    <text evidence="2">Homodimer.</text>
</comment>
<comment type="subcellular location">
    <subcellularLocation>
        <location evidence="1">Secreted</location>
    </subcellularLocation>
</comment>
<comment type="similarity">
    <text evidence="4">Belongs to the PBP/GOBP family.</text>
</comment>
<evidence type="ECO:0000250" key="1"/>
<evidence type="ECO:0000250" key="2">
    <source>
        <dbReference type="UniProtKB" id="P20797"/>
    </source>
</evidence>
<evidence type="ECO:0000250" key="3">
    <source>
        <dbReference type="UniProtKB" id="Q8WP90"/>
    </source>
</evidence>
<evidence type="ECO:0000255" key="4"/>
<evidence type="ECO:0000312" key="5">
    <source>
        <dbReference type="EMBL" id="AAL51117.1"/>
    </source>
</evidence>
<evidence type="ECO:0000312" key="6">
    <source>
        <dbReference type="EMBL" id="ABX25614.1"/>
    </source>
</evidence>
<evidence type="ECO:0000312" key="7">
    <source>
        <dbReference type="EMBL" id="ABX25615.1"/>
    </source>
</evidence>
<evidence type="ECO:0000312" key="8">
    <source>
        <dbReference type="EMBL" id="ABX25616.1"/>
    </source>
</evidence>
<dbReference type="EMBL" id="AF427891">
    <property type="protein sequence ID" value="AAL51117.1"/>
    <property type="molecule type" value="Genomic_DNA"/>
</dbReference>
<dbReference type="EMBL" id="EU220035">
    <property type="protein sequence ID" value="ABX25614.1"/>
    <property type="molecule type" value="Genomic_DNA"/>
</dbReference>
<dbReference type="EMBL" id="EU220036">
    <property type="protein sequence ID" value="ABX25615.1"/>
    <property type="molecule type" value="Genomic_DNA"/>
</dbReference>
<dbReference type="EMBL" id="EU220037">
    <property type="protein sequence ID" value="ABX25616.1"/>
    <property type="molecule type" value="Genomic_DNA"/>
</dbReference>
<dbReference type="SMR" id="Q8WRQ4"/>
<dbReference type="GO" id="GO:0005615">
    <property type="term" value="C:extracellular space"/>
    <property type="evidence" value="ECO:0000250"/>
    <property type="project" value="UniProtKB"/>
</dbReference>
<dbReference type="GO" id="GO:0005550">
    <property type="term" value="F:pheromone binding"/>
    <property type="evidence" value="ECO:0007669"/>
    <property type="project" value="UniProtKB-KW"/>
</dbReference>
<dbReference type="GO" id="GO:0019236">
    <property type="term" value="P:response to pheromone"/>
    <property type="evidence" value="ECO:0007669"/>
    <property type="project" value="UniProtKB-KW"/>
</dbReference>
<dbReference type="GO" id="GO:0035176">
    <property type="term" value="P:social behavior"/>
    <property type="evidence" value="ECO:0000250"/>
    <property type="project" value="UniProtKB"/>
</dbReference>
<dbReference type="CDD" id="cd23992">
    <property type="entry name" value="PBP_GOBP"/>
    <property type="match status" value="1"/>
</dbReference>
<dbReference type="FunFam" id="1.10.238.20:FF:000004">
    <property type="entry name" value="Pheromone-binding protein Gp-9"/>
    <property type="match status" value="1"/>
</dbReference>
<dbReference type="Gene3D" id="1.10.238.20">
    <property type="entry name" value="Pheromone/general odorant binding protein domain"/>
    <property type="match status" value="1"/>
</dbReference>
<dbReference type="InterPro" id="IPR006170">
    <property type="entry name" value="PBP/GOBP"/>
</dbReference>
<dbReference type="InterPro" id="IPR036728">
    <property type="entry name" value="PBP_GOBP_sf"/>
</dbReference>
<dbReference type="InterPro" id="IPR022354">
    <property type="entry name" value="Pheromone-bd_protein_Gp-9"/>
</dbReference>
<dbReference type="Pfam" id="PF01395">
    <property type="entry name" value="PBP_GOBP"/>
    <property type="match status" value="1"/>
</dbReference>
<dbReference type="PRINTS" id="PR02007">
    <property type="entry name" value="ODORANTBPGP9"/>
</dbReference>
<dbReference type="SUPFAM" id="SSF47565">
    <property type="entry name" value="Insect pheromone/odorant-binding proteins"/>
    <property type="match status" value="1"/>
</dbReference>